<evidence type="ECO:0000255" key="1">
    <source>
        <dbReference type="HAMAP-Rule" id="MF_03142"/>
    </source>
</evidence>
<evidence type="ECO:0000255" key="2">
    <source>
        <dbReference type="PROSITE-ProRule" id="PRU01239"/>
    </source>
</evidence>
<evidence type="ECO:0000305" key="3"/>
<gene>
    <name type="ORF">AFLA_059800</name>
</gene>
<accession>B8NDP1</accession>
<proteinExistence type="inferred from homology"/>
<feature type="chain" id="PRO_0000406153" description="Putative glutathione-dependent formaldehyde-activating enzyme">
    <location>
        <begin position="1"/>
        <end position="191"/>
    </location>
</feature>
<feature type="domain" description="CENP-V/GFA" evidence="2">
    <location>
        <begin position="20"/>
        <end position="166"/>
    </location>
</feature>
<feature type="binding site" evidence="1 2">
    <location>
        <position position="27"/>
    </location>
    <ligand>
        <name>Zn(2+)</name>
        <dbReference type="ChEBI" id="CHEBI:29105"/>
        <label>1</label>
        <note>structural</note>
    </ligand>
</feature>
<feature type="binding site" evidence="1 2">
    <location>
        <position position="29"/>
    </location>
    <ligand>
        <name>Zn(2+)</name>
        <dbReference type="ChEBI" id="CHEBI:29105"/>
        <label>1</label>
        <note>structural</note>
    </ligand>
</feature>
<feature type="binding site" evidence="1 2">
    <location>
        <position position="48"/>
    </location>
    <ligand>
        <name>Zn(2+)</name>
        <dbReference type="ChEBI" id="CHEBI:29105"/>
        <label>2</label>
        <note>catalytic</note>
    </ligand>
</feature>
<feature type="binding site" evidence="1 2">
    <location>
        <position position="50"/>
    </location>
    <ligand>
        <name>Zn(2+)</name>
        <dbReference type="ChEBI" id="CHEBI:29105"/>
        <label>2</label>
        <note>catalytic</note>
    </ligand>
</feature>
<feature type="binding site" evidence="1 2">
    <location>
        <position position="53"/>
    </location>
    <ligand>
        <name>Zn(2+)</name>
        <dbReference type="ChEBI" id="CHEBI:29105"/>
        <label>2</label>
        <note>catalytic</note>
    </ligand>
</feature>
<feature type="binding site" evidence="1 2">
    <location>
        <position position="95"/>
    </location>
    <ligand>
        <name>Zn(2+)</name>
        <dbReference type="ChEBI" id="CHEBI:29105"/>
        <label>1</label>
        <note>structural</note>
    </ligand>
</feature>
<feature type="binding site" evidence="1 2">
    <location>
        <position position="98"/>
    </location>
    <ligand>
        <name>Zn(2+)</name>
        <dbReference type="ChEBI" id="CHEBI:29105"/>
        <label>1</label>
        <note>structural</note>
    </ligand>
</feature>
<reference key="1">
    <citation type="journal article" date="2015" name="Genome Announc.">
        <title>Genome sequence of Aspergillus flavus NRRL 3357, a strain that causes aflatoxin contamination of food and feed.</title>
        <authorList>
            <person name="Nierman W.C."/>
            <person name="Yu J."/>
            <person name="Fedorova-Abrams N.D."/>
            <person name="Losada L."/>
            <person name="Cleveland T.E."/>
            <person name="Bhatnagar D."/>
            <person name="Bennett J.W."/>
            <person name="Dean R."/>
            <person name="Payne G.A."/>
        </authorList>
    </citation>
    <scope>NUCLEOTIDE SEQUENCE [LARGE SCALE GENOMIC DNA]</scope>
    <source>
        <strain>ATCC 200026 / FGSC A1120 / IAM 13836 / NRRL 3357 / JCM 12722 / SRRC 167</strain>
    </source>
</reference>
<comment type="function">
    <text evidence="1">Catalyzes the condensation of formaldehyde and glutathione to S-hydroxymethylglutathione.</text>
</comment>
<comment type="catalytic activity">
    <reaction evidence="1">
        <text>S-(hydroxymethyl)glutathione = glutathione + formaldehyde</text>
        <dbReference type="Rhea" id="RHEA:22488"/>
        <dbReference type="ChEBI" id="CHEBI:16842"/>
        <dbReference type="ChEBI" id="CHEBI:57925"/>
        <dbReference type="ChEBI" id="CHEBI:58758"/>
        <dbReference type="EC" id="4.4.1.22"/>
    </reaction>
</comment>
<comment type="cofactor">
    <cofactor evidence="1 2">
        <name>Zn(2+)</name>
        <dbReference type="ChEBI" id="CHEBI:29105"/>
    </cofactor>
    <text evidence="1 2">Binds 2 Zn(2+) ions per subunit.</text>
</comment>
<comment type="pathway">
    <text evidence="1">One-carbon metabolism; formaldehyde degradation; formate from formaldehyde (glutathione route): step 1/3.</text>
</comment>
<comment type="similarity">
    <text evidence="3">Belongs to the Gfa family.</text>
</comment>
<protein>
    <recommendedName>
        <fullName evidence="1">Putative glutathione-dependent formaldehyde-activating enzyme</fullName>
        <ecNumber evidence="1">4.4.1.22</ecNumber>
    </recommendedName>
    <alternativeName>
        <fullName evidence="1">S-(hydroxymethyl)glutathione synthase</fullName>
    </alternativeName>
</protein>
<dbReference type="EC" id="4.4.1.22" evidence="1"/>
<dbReference type="EMBL" id="EQ963477">
    <property type="protein sequence ID" value="EED51717.1"/>
    <property type="molecule type" value="Genomic_DNA"/>
</dbReference>
<dbReference type="RefSeq" id="XP_002378724.1">
    <property type="nucleotide sequence ID" value="XM_002378683.1"/>
</dbReference>
<dbReference type="SMR" id="B8NDP1"/>
<dbReference type="STRING" id="332952.B8NDP1"/>
<dbReference type="EnsemblFungi" id="EED51717">
    <property type="protein sequence ID" value="EED51717"/>
    <property type="gene ID" value="AFLA_059800"/>
</dbReference>
<dbReference type="VEuPathDB" id="FungiDB:AFLA_005034"/>
<dbReference type="eggNOG" id="ENOG502SKH9">
    <property type="taxonomic scope" value="Eukaryota"/>
</dbReference>
<dbReference type="HOGENOM" id="CLU_090716_0_0_1"/>
<dbReference type="OMA" id="ECGTHMY"/>
<dbReference type="UniPathway" id="UPA00562">
    <property type="reaction ID" value="UER00621"/>
</dbReference>
<dbReference type="GO" id="GO:0051907">
    <property type="term" value="F:S-(hydroxymethyl)glutathione synthase activity"/>
    <property type="evidence" value="ECO:0007669"/>
    <property type="project" value="UniProtKB-UniRule"/>
</dbReference>
<dbReference type="GO" id="GO:0008270">
    <property type="term" value="F:zinc ion binding"/>
    <property type="evidence" value="ECO:0007669"/>
    <property type="project" value="UniProtKB-UniRule"/>
</dbReference>
<dbReference type="GO" id="GO:0046294">
    <property type="term" value="P:formaldehyde catabolic process"/>
    <property type="evidence" value="ECO:0007669"/>
    <property type="project" value="UniProtKB-UniRule"/>
</dbReference>
<dbReference type="Gene3D" id="3.90.1590.10">
    <property type="entry name" value="glutathione-dependent formaldehyde- activating enzyme (gfa)"/>
    <property type="match status" value="1"/>
</dbReference>
<dbReference type="HAMAP" id="MF_00723">
    <property type="entry name" value="Formald_GSH"/>
    <property type="match status" value="1"/>
</dbReference>
<dbReference type="InterPro" id="IPR006913">
    <property type="entry name" value="CENP-V/GFA"/>
</dbReference>
<dbReference type="InterPro" id="IPR014185">
    <property type="entry name" value="Formald_GSH"/>
</dbReference>
<dbReference type="InterPro" id="IPR011057">
    <property type="entry name" value="Mss4-like_sf"/>
</dbReference>
<dbReference type="NCBIfam" id="TIGR02820">
    <property type="entry name" value="formald_GSH"/>
    <property type="match status" value="1"/>
</dbReference>
<dbReference type="NCBIfam" id="NF003829">
    <property type="entry name" value="PRK05417.1"/>
    <property type="match status" value="1"/>
</dbReference>
<dbReference type="PANTHER" id="PTHR33337:SF40">
    <property type="entry name" value="CENP-V_GFA DOMAIN-CONTAINING PROTEIN-RELATED"/>
    <property type="match status" value="1"/>
</dbReference>
<dbReference type="PANTHER" id="PTHR33337">
    <property type="entry name" value="GFA DOMAIN-CONTAINING PROTEIN"/>
    <property type="match status" value="1"/>
</dbReference>
<dbReference type="Pfam" id="PF04828">
    <property type="entry name" value="GFA"/>
    <property type="match status" value="1"/>
</dbReference>
<dbReference type="PIRSF" id="PIRSF033318">
    <property type="entry name" value="Formald_GSH"/>
    <property type="match status" value="1"/>
</dbReference>
<dbReference type="SUPFAM" id="SSF51316">
    <property type="entry name" value="Mss4-like"/>
    <property type="match status" value="1"/>
</dbReference>
<dbReference type="PROSITE" id="PS51891">
    <property type="entry name" value="CENP_V_GFA"/>
    <property type="match status" value="1"/>
</dbReference>
<name>GFA_ASPFN</name>
<organism>
    <name type="scientific">Aspergillus flavus (strain ATCC 200026 / FGSC A1120 / IAM 13836 / NRRL 3357 / JCM 12722 / SRRC 167)</name>
    <dbReference type="NCBI Taxonomy" id="332952"/>
    <lineage>
        <taxon>Eukaryota</taxon>
        <taxon>Fungi</taxon>
        <taxon>Dikarya</taxon>
        <taxon>Ascomycota</taxon>
        <taxon>Pezizomycotina</taxon>
        <taxon>Eurotiomycetes</taxon>
        <taxon>Eurotiomycetidae</taxon>
        <taxon>Eurotiales</taxon>
        <taxon>Aspergillaceae</taxon>
        <taxon>Aspergillus</taxon>
        <taxon>Aspergillus subgen. Circumdati</taxon>
    </lineage>
</organism>
<sequence>MPVSLHPLVDNGITKGDANFPGGNLYCLCPQNKVTVAIKGNVAHNHACGCSKCWKPAGALFSVVGVVPKENLSVAANADKLEILDKAAAIQRYACKECGTHLFGRIEIDHPFKGLDFVHAELSDKKGWQEPQFAGFVSSIIEQGFHPNGMDEVRSKFQSLGLQTYDTLSPPLMDLIATYTGKKNGKLSANL</sequence>
<keyword id="KW-0456">Lyase</keyword>
<keyword id="KW-0479">Metal-binding</keyword>
<keyword id="KW-0862">Zinc</keyword>